<name>Y4289_ARATH</name>
<protein>
    <recommendedName>
        <fullName>UPF0725 protein At4g28920</fullName>
    </recommendedName>
</protein>
<accession>Q9SV54</accession>
<reference key="1">
    <citation type="journal article" date="1999" name="Nature">
        <title>Sequence and analysis of chromosome 4 of the plant Arabidopsis thaliana.</title>
        <authorList>
            <person name="Mayer K.F.X."/>
            <person name="Schueller C."/>
            <person name="Wambutt R."/>
            <person name="Murphy G."/>
            <person name="Volckaert G."/>
            <person name="Pohl T."/>
            <person name="Duesterhoeft A."/>
            <person name="Stiekema W."/>
            <person name="Entian K.-D."/>
            <person name="Terryn N."/>
            <person name="Harris B."/>
            <person name="Ansorge W."/>
            <person name="Brandt P."/>
            <person name="Grivell L.A."/>
            <person name="Rieger M."/>
            <person name="Weichselgartner M."/>
            <person name="de Simone V."/>
            <person name="Obermaier B."/>
            <person name="Mache R."/>
            <person name="Mueller M."/>
            <person name="Kreis M."/>
            <person name="Delseny M."/>
            <person name="Puigdomenech P."/>
            <person name="Watson M."/>
            <person name="Schmidtheini T."/>
            <person name="Reichert B."/>
            <person name="Portetelle D."/>
            <person name="Perez-Alonso M."/>
            <person name="Boutry M."/>
            <person name="Bancroft I."/>
            <person name="Vos P."/>
            <person name="Hoheisel J."/>
            <person name="Zimmermann W."/>
            <person name="Wedler H."/>
            <person name="Ridley P."/>
            <person name="Langham S.-A."/>
            <person name="McCullagh B."/>
            <person name="Bilham L."/>
            <person name="Robben J."/>
            <person name="van der Schueren J."/>
            <person name="Grymonprez B."/>
            <person name="Chuang Y.-J."/>
            <person name="Vandenbussche F."/>
            <person name="Braeken M."/>
            <person name="Weltjens I."/>
            <person name="Voet M."/>
            <person name="Bastiaens I."/>
            <person name="Aert R."/>
            <person name="Defoor E."/>
            <person name="Weitzenegger T."/>
            <person name="Bothe G."/>
            <person name="Ramsperger U."/>
            <person name="Hilbert H."/>
            <person name="Braun M."/>
            <person name="Holzer E."/>
            <person name="Brandt A."/>
            <person name="Peters S."/>
            <person name="van Staveren M."/>
            <person name="Dirkse W."/>
            <person name="Mooijman P."/>
            <person name="Klein Lankhorst R."/>
            <person name="Rose M."/>
            <person name="Hauf J."/>
            <person name="Koetter P."/>
            <person name="Berneiser S."/>
            <person name="Hempel S."/>
            <person name="Feldpausch M."/>
            <person name="Lamberth S."/>
            <person name="Van den Daele H."/>
            <person name="De Keyser A."/>
            <person name="Buysshaert C."/>
            <person name="Gielen J."/>
            <person name="Villarroel R."/>
            <person name="De Clercq R."/>
            <person name="van Montagu M."/>
            <person name="Rogers J."/>
            <person name="Cronin A."/>
            <person name="Quail M.A."/>
            <person name="Bray-Allen S."/>
            <person name="Clark L."/>
            <person name="Doggett J."/>
            <person name="Hall S."/>
            <person name="Kay M."/>
            <person name="Lennard N."/>
            <person name="McLay K."/>
            <person name="Mayes R."/>
            <person name="Pettett A."/>
            <person name="Rajandream M.A."/>
            <person name="Lyne M."/>
            <person name="Benes V."/>
            <person name="Rechmann S."/>
            <person name="Borkova D."/>
            <person name="Bloecker H."/>
            <person name="Scharfe M."/>
            <person name="Grimm M."/>
            <person name="Loehnert T.-H."/>
            <person name="Dose S."/>
            <person name="de Haan M."/>
            <person name="Maarse A.C."/>
            <person name="Schaefer M."/>
            <person name="Mueller-Auer S."/>
            <person name="Gabel C."/>
            <person name="Fuchs M."/>
            <person name="Fartmann B."/>
            <person name="Granderath K."/>
            <person name="Dauner D."/>
            <person name="Herzl A."/>
            <person name="Neumann S."/>
            <person name="Argiriou A."/>
            <person name="Vitale D."/>
            <person name="Liguori R."/>
            <person name="Piravandi E."/>
            <person name="Massenet O."/>
            <person name="Quigley F."/>
            <person name="Clabauld G."/>
            <person name="Muendlein A."/>
            <person name="Felber R."/>
            <person name="Schnabl S."/>
            <person name="Hiller R."/>
            <person name="Schmidt W."/>
            <person name="Lecharny A."/>
            <person name="Aubourg S."/>
            <person name="Chefdor F."/>
            <person name="Cooke R."/>
            <person name="Berger C."/>
            <person name="Monfort A."/>
            <person name="Casacuberta E."/>
            <person name="Gibbons T."/>
            <person name="Weber N."/>
            <person name="Vandenbol M."/>
            <person name="Bargues M."/>
            <person name="Terol J."/>
            <person name="Torres A."/>
            <person name="Perez-Perez A."/>
            <person name="Purnelle B."/>
            <person name="Bent E."/>
            <person name="Johnson S."/>
            <person name="Tacon D."/>
            <person name="Jesse T."/>
            <person name="Heijnen L."/>
            <person name="Schwarz S."/>
            <person name="Scholler P."/>
            <person name="Heber S."/>
            <person name="Francs P."/>
            <person name="Bielke C."/>
            <person name="Frishman D."/>
            <person name="Haase D."/>
            <person name="Lemcke K."/>
            <person name="Mewes H.-W."/>
            <person name="Stocker S."/>
            <person name="Zaccaria P."/>
            <person name="Bevan M."/>
            <person name="Wilson R.K."/>
            <person name="de la Bastide M."/>
            <person name="Habermann K."/>
            <person name="Parnell L."/>
            <person name="Dedhia N."/>
            <person name="Gnoj L."/>
            <person name="Schutz K."/>
            <person name="Huang E."/>
            <person name="Spiegel L."/>
            <person name="Sekhon M."/>
            <person name="Murray J."/>
            <person name="Sheet P."/>
            <person name="Cordes M."/>
            <person name="Abu-Threideh J."/>
            <person name="Stoneking T."/>
            <person name="Kalicki J."/>
            <person name="Graves T."/>
            <person name="Harmon G."/>
            <person name="Edwards J."/>
            <person name="Latreille P."/>
            <person name="Courtney L."/>
            <person name="Cloud J."/>
            <person name="Abbott A."/>
            <person name="Scott K."/>
            <person name="Johnson D."/>
            <person name="Minx P."/>
            <person name="Bentley D."/>
            <person name="Fulton B."/>
            <person name="Miller N."/>
            <person name="Greco T."/>
            <person name="Kemp K."/>
            <person name="Kramer J."/>
            <person name="Fulton L."/>
            <person name="Mardis E."/>
            <person name="Dante M."/>
            <person name="Pepin K."/>
            <person name="Hillier L.W."/>
            <person name="Nelson J."/>
            <person name="Spieth J."/>
            <person name="Ryan E."/>
            <person name="Andrews S."/>
            <person name="Geisel C."/>
            <person name="Layman D."/>
            <person name="Du H."/>
            <person name="Ali J."/>
            <person name="Berghoff A."/>
            <person name="Jones K."/>
            <person name="Drone K."/>
            <person name="Cotton M."/>
            <person name="Joshu C."/>
            <person name="Antonoiu B."/>
            <person name="Zidanic M."/>
            <person name="Strong C."/>
            <person name="Sun H."/>
            <person name="Lamar B."/>
            <person name="Yordan C."/>
            <person name="Ma P."/>
            <person name="Zhong J."/>
            <person name="Preston R."/>
            <person name="Vil D."/>
            <person name="Shekher M."/>
            <person name="Matero A."/>
            <person name="Shah R."/>
            <person name="Swaby I.K."/>
            <person name="O'Shaughnessy A."/>
            <person name="Rodriguez M."/>
            <person name="Hoffman J."/>
            <person name="Till S."/>
            <person name="Granat S."/>
            <person name="Shohdy N."/>
            <person name="Hasegawa A."/>
            <person name="Hameed A."/>
            <person name="Lodhi M."/>
            <person name="Johnson A."/>
            <person name="Chen E."/>
            <person name="Marra M.A."/>
            <person name="Martienssen R."/>
            <person name="McCombie W.R."/>
        </authorList>
    </citation>
    <scope>NUCLEOTIDE SEQUENCE [LARGE SCALE GENOMIC DNA]</scope>
    <source>
        <strain>cv. Columbia</strain>
    </source>
</reference>
<reference key="2">
    <citation type="journal article" date="2017" name="Plant J.">
        <title>Araport11: a complete reannotation of the Arabidopsis thaliana reference genome.</title>
        <authorList>
            <person name="Cheng C.Y."/>
            <person name="Krishnakumar V."/>
            <person name="Chan A.P."/>
            <person name="Thibaud-Nissen F."/>
            <person name="Schobel S."/>
            <person name="Town C.D."/>
        </authorList>
    </citation>
    <scope>GENOME REANNOTATION</scope>
    <source>
        <strain>cv. Columbia</strain>
    </source>
</reference>
<feature type="chain" id="PRO_0000363123" description="UPF0725 protein At4g28920">
    <location>
        <begin position="1"/>
        <end position="292"/>
    </location>
</feature>
<feature type="region of interest" description="Disordered" evidence="1">
    <location>
        <begin position="1"/>
        <end position="24"/>
    </location>
</feature>
<feature type="compositionally biased region" description="Acidic residues" evidence="1">
    <location>
        <begin position="1"/>
        <end position="17"/>
    </location>
</feature>
<keyword id="KW-1185">Reference proteome</keyword>
<comment type="similarity">
    <text evidence="2">Belongs to the UPF0725 (EMB2204) family.</text>
</comment>
<dbReference type="EMBL" id="AL078469">
    <property type="protein sequence ID" value="CAB43906.1"/>
    <property type="molecule type" value="Genomic_DNA"/>
</dbReference>
<dbReference type="EMBL" id="AL161573">
    <property type="protein sequence ID" value="CAB81480.1"/>
    <property type="molecule type" value="Genomic_DNA"/>
</dbReference>
<dbReference type="EMBL" id="CP002687">
    <property type="protein sequence ID" value="AEE85563.1"/>
    <property type="molecule type" value="Genomic_DNA"/>
</dbReference>
<dbReference type="PIR" id="T08947">
    <property type="entry name" value="T08947"/>
</dbReference>
<dbReference type="RefSeq" id="NP_194621.1">
    <property type="nucleotide sequence ID" value="NM_119036.1"/>
</dbReference>
<dbReference type="SMR" id="Q9SV54"/>
<dbReference type="GlyGen" id="Q9SV54">
    <property type="glycosylation" value="1 site"/>
</dbReference>
<dbReference type="iPTMnet" id="Q9SV54"/>
<dbReference type="PaxDb" id="3702-AT4G28920.1"/>
<dbReference type="EnsemblPlants" id="AT4G28920.1">
    <property type="protein sequence ID" value="AT4G28920.1"/>
    <property type="gene ID" value="AT4G28920"/>
</dbReference>
<dbReference type="GeneID" id="829013"/>
<dbReference type="Gramene" id="AT4G28920.1">
    <property type="protein sequence ID" value="AT4G28920.1"/>
    <property type="gene ID" value="AT4G28920"/>
</dbReference>
<dbReference type="KEGG" id="ath:AT4G28920"/>
<dbReference type="Araport" id="AT4G28920"/>
<dbReference type="TAIR" id="AT4G28920"/>
<dbReference type="HOGENOM" id="CLU_053767_2_1_1"/>
<dbReference type="InParanoid" id="Q9SV54"/>
<dbReference type="OMA" id="WHATRKS"/>
<dbReference type="OrthoDB" id="1083148at2759"/>
<dbReference type="PhylomeDB" id="Q9SV54"/>
<dbReference type="PRO" id="PR:Q9SV54"/>
<dbReference type="Proteomes" id="UP000006548">
    <property type="component" value="Chromosome 4"/>
</dbReference>
<dbReference type="ExpressionAtlas" id="Q9SV54">
    <property type="expression patterns" value="baseline"/>
</dbReference>
<dbReference type="InterPro" id="IPR006462">
    <property type="entry name" value="MS5"/>
</dbReference>
<dbReference type="NCBIfam" id="TIGR01572">
    <property type="entry name" value="A_thl_para_3677"/>
    <property type="match status" value="1"/>
</dbReference>
<dbReference type="PANTHER" id="PTHR31260:SF32">
    <property type="match status" value="1"/>
</dbReference>
<dbReference type="PANTHER" id="PTHR31260">
    <property type="entry name" value="CYSTATIN/MONELLIN SUPERFAMILY PROTEIN"/>
    <property type="match status" value="1"/>
</dbReference>
<dbReference type="Pfam" id="PF04776">
    <property type="entry name" value="protein_MS5"/>
    <property type="match status" value="1"/>
</dbReference>
<sequence length="292" mass="33787">MSENDSSESDIEMDPEEEKVYRRQVEESDGFDVDYFRYAGIKPCPLKDENAYTYDIELFGRLGLHCYNLLHEGTNLKLMCIPKYNTNNIGVSSGDYYYITLEAIDTYNNSPCTFQTYVSEWYQTSEHGYLVVETYIARLKGPTGPHNTCIGRGWIWGWEEEAIDVYYKGKLPKWLTKDLLAAAKDEYYVVQESDILENEWLHLYAEIALYSNWKWHATRKSCEESPHLKLKANNAIFYMGFKGSGDHHPSGKHVEYQTIVRKAMDGKPGHIRLEVDSWQAIPSDLIGEDEPP</sequence>
<organism>
    <name type="scientific">Arabidopsis thaliana</name>
    <name type="common">Mouse-ear cress</name>
    <dbReference type="NCBI Taxonomy" id="3702"/>
    <lineage>
        <taxon>Eukaryota</taxon>
        <taxon>Viridiplantae</taxon>
        <taxon>Streptophyta</taxon>
        <taxon>Embryophyta</taxon>
        <taxon>Tracheophyta</taxon>
        <taxon>Spermatophyta</taxon>
        <taxon>Magnoliopsida</taxon>
        <taxon>eudicotyledons</taxon>
        <taxon>Gunneridae</taxon>
        <taxon>Pentapetalae</taxon>
        <taxon>rosids</taxon>
        <taxon>malvids</taxon>
        <taxon>Brassicales</taxon>
        <taxon>Brassicaceae</taxon>
        <taxon>Camelineae</taxon>
        <taxon>Arabidopsis</taxon>
    </lineage>
</organism>
<evidence type="ECO:0000256" key="1">
    <source>
        <dbReference type="SAM" id="MobiDB-lite"/>
    </source>
</evidence>
<evidence type="ECO:0000305" key="2"/>
<gene>
    <name type="ordered locus">At4g28920</name>
    <name type="ORF">F25O24.40</name>
</gene>
<proteinExistence type="inferred from homology"/>